<name>PNPT1_MOUSE</name>
<comment type="function">
    <text evidence="1 6">RNA-binding protein implicated in numerous RNA metabolic processes. Catalyzes the phosphorolysis of single-stranded polyribonucleotides processively in the 3'-to-5' direction. Mitochondrial intermembrane factor with RNA-processing exoribonulease activity. Component of the mitochondrial degradosome (mtEXO) complex, that degrades 3' overhang double-stranded RNA with a 3'-to-5' directionality in an ATP-dependent manner. Involved in the degradation of non-coding mitochondrial transcripts (MT-ncRNA) and tRNA-like molecules (By similarity). Required for correct processing and polyadenylation of mitochondrial mRNAs. Plays a role as a cytoplasmic RNA import factor that mediates the translocation of small RNA components, like the 5S RNA, the RNA subunit of ribonuclease P and the mitochondrial RNA-processing (MRP) RNA, into the mitochondrial matrix. Plays a role in mitochondrial morphogenesis and respiration; regulates the expression of the electron transport chain (ETC) components at the mRNA and protein levels. In the cytoplasm, shows a 3'-to-5' exoribonuclease mediating mRNA degradation activity; degrades c-myc mRNA upon treatment with IFNB1/IFN-beta, resulting in a growth arrest in melanoma cells. Regulates the stability of specific mature miRNAs in melanoma cells; specifically and selectively degrades miR-221, preferentially. Also plays a role in RNA cell surveillance by cleaning up oxidized RNAs. Binds to the RNA subunit of ribonuclease P, MRP RNA and miR-221 microRNA.</text>
</comment>
<comment type="catalytic activity">
    <reaction>
        <text>RNA(n+1) + phosphate = RNA(n) + a ribonucleoside 5'-diphosphate</text>
        <dbReference type="Rhea" id="RHEA:22096"/>
        <dbReference type="Rhea" id="RHEA-COMP:14527"/>
        <dbReference type="Rhea" id="RHEA-COMP:17342"/>
        <dbReference type="ChEBI" id="CHEBI:43474"/>
        <dbReference type="ChEBI" id="CHEBI:57930"/>
        <dbReference type="ChEBI" id="CHEBI:140395"/>
        <dbReference type="EC" id="2.7.7.8"/>
    </reaction>
</comment>
<comment type="subunit">
    <text evidence="1">Homotrimer; in free form. Homooligomer. Component of the mitochondrial degradosome (mtEXO) complex which is a heteropentamer containing 2 copies of SUPV3L1 and 3 copies of PNPT1. As part of the mitochondrial degradosome complex, interacts with GRSF1 in an RNA-dependent manner; the interaction enhances the activity of the complex. Interacts with TCL1A; the interaction has no effect on PNPT1 exonuclease activity.</text>
</comment>
<comment type="subcellular location">
    <subcellularLocation>
        <location evidence="1">Cytoplasm</location>
    </subcellularLocation>
    <subcellularLocation>
        <location evidence="1">Mitochondrion matrix</location>
    </subcellularLocation>
    <subcellularLocation>
        <location evidence="5">Mitochondrion intermembrane space</location>
        <topology evidence="5">Peripheral membrane protein</topology>
    </subcellularLocation>
</comment>
<comment type="alternative products">
    <event type="alternative splicing"/>
    <isoform>
        <id>Q8K1R3-1</id>
        <name>1</name>
        <sequence type="displayed"/>
    </isoform>
    <isoform>
        <id>Q8K1R3-2</id>
        <name>2</name>
        <sequence type="described" ref="VSP_013639 VSP_013640"/>
    </isoform>
</comment>
<comment type="disruption phenotype">
    <text evidence="6">Mice show alteration in the mechanisms of polycistronic mtRNAs processing in mitochondria, resulting in fewer mature mtRNAs and a reduction in electron transport chain (ETC) components formation.</text>
</comment>
<comment type="similarity">
    <text evidence="8">Belongs to the polyribonucleotide nucleotidyltransferase family.</text>
</comment>
<comment type="sequence caution" evidence="8">
    <conflict type="frameshift">
        <sequence resource="EMBL-CDS" id="AAO33354"/>
    </conflict>
</comment>
<feature type="transit peptide" description="Mitochondrion" evidence="2">
    <location>
        <begin position="1"/>
        <end position="45"/>
    </location>
</feature>
<feature type="chain" id="PRO_0000024752" description="Polyribonucleotide nucleotidyltransferase 1, mitochondrial">
    <location>
        <begin position="46"/>
        <end position="783"/>
    </location>
</feature>
<feature type="domain" description="KH" evidence="3">
    <location>
        <begin position="605"/>
        <end position="664"/>
    </location>
</feature>
<feature type="domain" description="S1 motif" evidence="4">
    <location>
        <begin position="679"/>
        <end position="750"/>
    </location>
</feature>
<feature type="modified residue" description="N6-acetyllysine" evidence="9">
    <location>
        <position position="250"/>
    </location>
</feature>
<feature type="modified residue" description="N6-acetyllysine" evidence="1">
    <location>
        <position position="264"/>
    </location>
</feature>
<feature type="modified residue" description="N6-acetyllysine" evidence="1">
    <location>
        <position position="285"/>
    </location>
</feature>
<feature type="modified residue" description="N6-succinyllysine" evidence="10">
    <location>
        <position position="552"/>
    </location>
</feature>
<feature type="modified residue" description="Phosphoserine" evidence="1">
    <location>
        <position position="754"/>
    </location>
</feature>
<feature type="splice variant" id="VSP_013639" description="In isoform 2." evidence="7">
    <original>GIEDYN</original>
    <variation>ASIFPV</variation>
    <location>
        <begin position="535"/>
        <end position="540"/>
    </location>
</feature>
<feature type="splice variant" id="VSP_013640" description="In isoform 2." evidence="7">
    <location>
        <begin position="541"/>
        <end position="783"/>
    </location>
</feature>
<feature type="sequence conflict" description="In Ref. 2; AAO33354." evidence="8" ref="2">
    <original>A</original>
    <variation>P</variation>
    <location>
        <position position="90"/>
    </location>
</feature>
<feature type="sequence conflict" description="In Ref. 2; AAO33354." evidence="8" ref="2">
    <original>V</original>
    <variation>G</variation>
    <location>
        <position position="298"/>
    </location>
</feature>
<feature type="sequence conflict" description="In Ref. 2; AAO33354." evidence="8" ref="2">
    <original>K</original>
    <variation>Q</variation>
    <location>
        <position position="315"/>
    </location>
</feature>
<feature type="sequence conflict" description="In Ref. 2; AAO33354." evidence="8" ref="2">
    <original>I</original>
    <variation>V</variation>
    <location>
        <position position="415"/>
    </location>
</feature>
<feature type="sequence conflict" description="In Ref. 3; BAB23374." evidence="8" ref="3">
    <original>P</original>
    <variation>L</variation>
    <location>
        <position position="431"/>
    </location>
</feature>
<feature type="helix" evidence="11">
    <location>
        <begin position="281"/>
        <end position="299"/>
    </location>
</feature>
<feature type="helix" evidence="11">
    <location>
        <begin position="307"/>
        <end position="324"/>
    </location>
</feature>
<feature type="turn" evidence="11">
    <location>
        <begin position="325"/>
        <end position="327"/>
    </location>
</feature>
<feature type="strand" evidence="11">
    <location>
        <begin position="329"/>
        <end position="331"/>
    </location>
</feature>
<feature type="helix" evidence="11">
    <location>
        <begin position="333"/>
        <end position="352"/>
    </location>
</feature>
<proteinExistence type="evidence at protein level"/>
<evidence type="ECO:0000250" key="1">
    <source>
        <dbReference type="UniProtKB" id="Q8TCS8"/>
    </source>
</evidence>
<evidence type="ECO:0000255" key="2"/>
<evidence type="ECO:0000255" key="3">
    <source>
        <dbReference type="PROSITE-ProRule" id="PRU00117"/>
    </source>
</evidence>
<evidence type="ECO:0000255" key="4">
    <source>
        <dbReference type="PROSITE-ProRule" id="PRU00180"/>
    </source>
</evidence>
<evidence type="ECO:0000269" key="5">
    <source>
    </source>
</evidence>
<evidence type="ECO:0000269" key="6">
    <source>
    </source>
</evidence>
<evidence type="ECO:0000303" key="7">
    <source>
    </source>
</evidence>
<evidence type="ECO:0000305" key="8"/>
<evidence type="ECO:0007744" key="9">
    <source>
    </source>
</evidence>
<evidence type="ECO:0007744" key="10">
    <source>
    </source>
</evidence>
<evidence type="ECO:0007829" key="11">
    <source>
        <dbReference type="PDB" id="1WHU"/>
    </source>
</evidence>
<gene>
    <name type="primary">Pnpt1</name>
    <name type="synonym">Pnpase</name>
</gene>
<dbReference type="EC" id="2.7.7.8"/>
<dbReference type="EMBL" id="AJ507387">
    <property type="protein sequence ID" value="CAD45436.1"/>
    <property type="molecule type" value="mRNA"/>
</dbReference>
<dbReference type="EMBL" id="AF465249">
    <property type="protein sequence ID" value="AAO33354.1"/>
    <property type="status" value="ALT_FRAME"/>
    <property type="molecule type" value="mRNA"/>
</dbReference>
<dbReference type="EMBL" id="AK004563">
    <property type="protein sequence ID" value="BAB23374.1"/>
    <property type="molecule type" value="mRNA"/>
</dbReference>
<dbReference type="EMBL" id="AK149419">
    <property type="protein sequence ID" value="BAE28862.1"/>
    <property type="molecule type" value="mRNA"/>
</dbReference>
<dbReference type="EMBL" id="BX000351">
    <property type="status" value="NOT_ANNOTATED_CDS"/>
    <property type="molecule type" value="Genomic_DNA"/>
</dbReference>
<dbReference type="EMBL" id="BC027228">
    <property type="protein sequence ID" value="AAH27228.2"/>
    <property type="molecule type" value="mRNA"/>
</dbReference>
<dbReference type="EMBL" id="BC049283">
    <property type="protein sequence ID" value="AAH49283.1"/>
    <property type="molecule type" value="mRNA"/>
</dbReference>
<dbReference type="EMBL" id="BC055826">
    <property type="protein sequence ID" value="AAH55826.1"/>
    <property type="molecule type" value="mRNA"/>
</dbReference>
<dbReference type="CCDS" id="CCDS24490.1">
    <molecule id="Q8K1R3-1"/>
</dbReference>
<dbReference type="RefSeq" id="NP_082145.1">
    <molecule id="Q8K1R3-1"/>
    <property type="nucleotide sequence ID" value="NM_027869.2"/>
</dbReference>
<dbReference type="RefSeq" id="XP_011242053.1">
    <molecule id="Q8K1R3-1"/>
    <property type="nucleotide sequence ID" value="XM_011243751.4"/>
</dbReference>
<dbReference type="PDB" id="1WHU">
    <property type="method" value="NMR"/>
    <property type="chains" value="A=273-363"/>
</dbReference>
<dbReference type="PDBsum" id="1WHU"/>
<dbReference type="BMRB" id="Q8K1R3"/>
<dbReference type="SMR" id="Q8K1R3"/>
<dbReference type="BioGRID" id="214865">
    <property type="interactions" value="7"/>
</dbReference>
<dbReference type="FunCoup" id="Q8K1R3">
    <property type="interactions" value="3218"/>
</dbReference>
<dbReference type="IntAct" id="Q8K1R3">
    <property type="interactions" value="1"/>
</dbReference>
<dbReference type="STRING" id="10090.ENSMUSP00000020756"/>
<dbReference type="GlyGen" id="Q8K1R3">
    <property type="glycosylation" value="2 sites, 1 N-linked glycan (1 site), 1 O-linked glycan (1 site)"/>
</dbReference>
<dbReference type="iPTMnet" id="Q8K1R3"/>
<dbReference type="PhosphoSitePlus" id="Q8K1R3"/>
<dbReference type="SwissPalm" id="Q8K1R3"/>
<dbReference type="jPOST" id="Q8K1R3"/>
<dbReference type="PaxDb" id="10090-ENSMUSP00000020756"/>
<dbReference type="PeptideAtlas" id="Q8K1R3"/>
<dbReference type="ProteomicsDB" id="289640">
    <molecule id="Q8K1R3-1"/>
</dbReference>
<dbReference type="ProteomicsDB" id="289641">
    <molecule id="Q8K1R3-2"/>
</dbReference>
<dbReference type="Pumba" id="Q8K1R3"/>
<dbReference type="Antibodypedia" id="30432">
    <property type="antibodies" value="340 antibodies from 31 providers"/>
</dbReference>
<dbReference type="DNASU" id="71701"/>
<dbReference type="Ensembl" id="ENSMUST00000020756.9">
    <molecule id="Q8K1R3-1"/>
    <property type="protein sequence ID" value="ENSMUSP00000020756.9"/>
    <property type="gene ID" value="ENSMUSG00000020464.16"/>
</dbReference>
<dbReference type="GeneID" id="71701"/>
<dbReference type="KEGG" id="mmu:71701"/>
<dbReference type="UCSC" id="uc007igp.1">
    <molecule id="Q8K1R3-1"/>
    <property type="organism name" value="mouse"/>
</dbReference>
<dbReference type="AGR" id="MGI:1918951"/>
<dbReference type="CTD" id="87178"/>
<dbReference type="MGI" id="MGI:1918951">
    <property type="gene designation" value="Pnpt1"/>
</dbReference>
<dbReference type="VEuPathDB" id="HostDB:ENSMUSG00000020464"/>
<dbReference type="eggNOG" id="KOG1067">
    <property type="taxonomic scope" value="Eukaryota"/>
</dbReference>
<dbReference type="GeneTree" id="ENSGT00390000014001"/>
<dbReference type="HOGENOM" id="CLU_004217_2_2_1"/>
<dbReference type="InParanoid" id="Q8K1R3"/>
<dbReference type="OMA" id="RFMFHYN"/>
<dbReference type="OrthoDB" id="437922at2759"/>
<dbReference type="PhylomeDB" id="Q8K1R3"/>
<dbReference type="TreeFam" id="TF315264"/>
<dbReference type="BRENDA" id="2.7.7.8">
    <property type="organism ID" value="3474"/>
</dbReference>
<dbReference type="BioGRID-ORCS" id="71701">
    <property type="hits" value="27 hits in 80 CRISPR screens"/>
</dbReference>
<dbReference type="ChiTaRS" id="Pnpt1">
    <property type="organism name" value="mouse"/>
</dbReference>
<dbReference type="EvolutionaryTrace" id="Q8K1R3"/>
<dbReference type="PRO" id="PR:Q8K1R3"/>
<dbReference type="Proteomes" id="UP000000589">
    <property type="component" value="Chromosome 11"/>
</dbReference>
<dbReference type="RNAct" id="Q8K1R3">
    <property type="molecule type" value="protein"/>
</dbReference>
<dbReference type="Bgee" id="ENSMUSG00000020464">
    <property type="expression patterns" value="Expressed in spermatocyte and 263 other cell types or tissues"/>
</dbReference>
<dbReference type="GO" id="GO:0005829">
    <property type="term" value="C:cytosol"/>
    <property type="evidence" value="ECO:0007669"/>
    <property type="project" value="Ensembl"/>
</dbReference>
<dbReference type="GO" id="GO:0005789">
    <property type="term" value="C:endoplasmic reticulum membrane"/>
    <property type="evidence" value="ECO:0007669"/>
    <property type="project" value="Ensembl"/>
</dbReference>
<dbReference type="GO" id="GO:0045025">
    <property type="term" value="C:mitochondrial degradosome"/>
    <property type="evidence" value="ECO:0000250"/>
    <property type="project" value="UniProtKB"/>
</dbReference>
<dbReference type="GO" id="GO:0005758">
    <property type="term" value="C:mitochondrial intermembrane space"/>
    <property type="evidence" value="ECO:0000314"/>
    <property type="project" value="MGI"/>
</dbReference>
<dbReference type="GO" id="GO:0005759">
    <property type="term" value="C:mitochondrial matrix"/>
    <property type="evidence" value="ECO:0007669"/>
    <property type="project" value="UniProtKB-SubCell"/>
</dbReference>
<dbReference type="GO" id="GO:0005739">
    <property type="term" value="C:mitochondrion"/>
    <property type="evidence" value="ECO:0000314"/>
    <property type="project" value="UniProtKB"/>
</dbReference>
<dbReference type="GO" id="GO:0005840">
    <property type="term" value="C:ribosome"/>
    <property type="evidence" value="ECO:0007669"/>
    <property type="project" value="Ensembl"/>
</dbReference>
<dbReference type="GO" id="GO:0000175">
    <property type="term" value="F:3'-5'-RNA exonuclease activity"/>
    <property type="evidence" value="ECO:0000250"/>
    <property type="project" value="UniProtKB"/>
</dbReference>
<dbReference type="GO" id="GO:0042802">
    <property type="term" value="F:identical protein binding"/>
    <property type="evidence" value="ECO:0007669"/>
    <property type="project" value="Ensembl"/>
</dbReference>
<dbReference type="GO" id="GO:0035198">
    <property type="term" value="F:miRNA binding"/>
    <property type="evidence" value="ECO:0000250"/>
    <property type="project" value="UniProtKB"/>
</dbReference>
<dbReference type="GO" id="GO:0034046">
    <property type="term" value="F:poly(G) binding"/>
    <property type="evidence" value="ECO:0000250"/>
    <property type="project" value="UniProtKB"/>
</dbReference>
<dbReference type="GO" id="GO:0008266">
    <property type="term" value="F:poly(U) RNA binding"/>
    <property type="evidence" value="ECO:0000250"/>
    <property type="project" value="UniProtKB"/>
</dbReference>
<dbReference type="GO" id="GO:0004654">
    <property type="term" value="F:polyribonucleotide nucleotidyltransferase activity"/>
    <property type="evidence" value="ECO:0000250"/>
    <property type="project" value="UniProtKB"/>
</dbReference>
<dbReference type="GO" id="GO:0035458">
    <property type="term" value="P:cellular response to interferon-beta"/>
    <property type="evidence" value="ECO:0007669"/>
    <property type="project" value="Ensembl"/>
</dbReference>
<dbReference type="GO" id="GO:0034599">
    <property type="term" value="P:cellular response to oxidative stress"/>
    <property type="evidence" value="ECO:0000250"/>
    <property type="project" value="UniProtKB"/>
</dbReference>
<dbReference type="GO" id="GO:0097421">
    <property type="term" value="P:liver regeneration"/>
    <property type="evidence" value="ECO:0007669"/>
    <property type="project" value="Ensembl"/>
</dbReference>
<dbReference type="GO" id="GO:0000958">
    <property type="term" value="P:mitochondrial mRNA catabolic process"/>
    <property type="evidence" value="ECO:0000315"/>
    <property type="project" value="UniProtKB"/>
</dbReference>
<dbReference type="GO" id="GO:0097222">
    <property type="term" value="P:mitochondrial mRNA polyadenylation"/>
    <property type="evidence" value="ECO:0000250"/>
    <property type="project" value="UniProtKB"/>
</dbReference>
<dbReference type="GO" id="GO:0000965">
    <property type="term" value="P:mitochondrial RNA 3'-end processing"/>
    <property type="evidence" value="ECO:0000250"/>
    <property type="project" value="UniProtKB"/>
</dbReference>
<dbReference type="GO" id="GO:0000964">
    <property type="term" value="P:mitochondrial RNA 5'-end processing"/>
    <property type="evidence" value="ECO:0000250"/>
    <property type="project" value="UniProtKB"/>
</dbReference>
<dbReference type="GO" id="GO:0000957">
    <property type="term" value="P:mitochondrial RNA catabolic process"/>
    <property type="evidence" value="ECO:0000250"/>
    <property type="project" value="UniProtKB"/>
</dbReference>
<dbReference type="GO" id="GO:0007005">
    <property type="term" value="P:mitochondrion organization"/>
    <property type="evidence" value="ECO:0000315"/>
    <property type="project" value="UniProtKB"/>
</dbReference>
<dbReference type="GO" id="GO:0006402">
    <property type="term" value="P:mRNA catabolic process"/>
    <property type="evidence" value="ECO:0000250"/>
    <property type="project" value="UniProtKB"/>
</dbReference>
<dbReference type="GO" id="GO:0006397">
    <property type="term" value="P:mRNA processing"/>
    <property type="evidence" value="ECO:0007669"/>
    <property type="project" value="UniProtKB-KW"/>
</dbReference>
<dbReference type="GO" id="GO:0071042">
    <property type="term" value="P:nuclear polyadenylation-dependent mRNA catabolic process"/>
    <property type="evidence" value="ECO:0000250"/>
    <property type="project" value="UniProtKB"/>
</dbReference>
<dbReference type="GO" id="GO:2000627">
    <property type="term" value="P:positive regulation of miRNA catabolic process"/>
    <property type="evidence" value="ECO:0000250"/>
    <property type="project" value="UniProtKB"/>
</dbReference>
<dbReference type="GO" id="GO:0000962">
    <property type="term" value="P:positive regulation of mitochondrial RNA catabolic process"/>
    <property type="evidence" value="ECO:0000250"/>
    <property type="project" value="UniProtKB"/>
</dbReference>
<dbReference type="GO" id="GO:0061014">
    <property type="term" value="P:positive regulation of mRNA catabolic process"/>
    <property type="evidence" value="ECO:0000250"/>
    <property type="project" value="UniProtKB"/>
</dbReference>
<dbReference type="GO" id="GO:0051260">
    <property type="term" value="P:protein homooligomerization"/>
    <property type="evidence" value="ECO:0000250"/>
    <property type="project" value="UniProtKB"/>
</dbReference>
<dbReference type="GO" id="GO:0070207">
    <property type="term" value="P:protein homotrimerization"/>
    <property type="evidence" value="ECO:0000250"/>
    <property type="project" value="UniProtKB"/>
</dbReference>
<dbReference type="GO" id="GO:0043457">
    <property type="term" value="P:regulation of cellular respiration"/>
    <property type="evidence" value="ECO:0000315"/>
    <property type="project" value="UniProtKB"/>
</dbReference>
<dbReference type="GO" id="GO:2000772">
    <property type="term" value="P:regulation of cellular senescence"/>
    <property type="evidence" value="ECO:0000250"/>
    <property type="project" value="UniProtKB"/>
</dbReference>
<dbReference type="GO" id="GO:0051591">
    <property type="term" value="P:response to cAMP"/>
    <property type="evidence" value="ECO:0007669"/>
    <property type="project" value="Ensembl"/>
</dbReference>
<dbReference type="GO" id="GO:0060416">
    <property type="term" value="P:response to growth hormone"/>
    <property type="evidence" value="ECO:0007669"/>
    <property type="project" value="Ensembl"/>
</dbReference>
<dbReference type="GO" id="GO:0006401">
    <property type="term" value="P:RNA catabolic process"/>
    <property type="evidence" value="ECO:0000250"/>
    <property type="project" value="UniProtKB"/>
</dbReference>
<dbReference type="GO" id="GO:0035927">
    <property type="term" value="P:RNA import into mitochondrion"/>
    <property type="evidence" value="ECO:0000250"/>
    <property type="project" value="UniProtKB"/>
</dbReference>
<dbReference type="GO" id="GO:0035928">
    <property type="term" value="P:rRNA import into mitochondrion"/>
    <property type="evidence" value="ECO:0000250"/>
    <property type="project" value="UniProtKB"/>
</dbReference>
<dbReference type="CDD" id="cd09033">
    <property type="entry name" value="KH-I_PNPT1"/>
    <property type="match status" value="1"/>
</dbReference>
<dbReference type="CDD" id="cd11363">
    <property type="entry name" value="RNase_PH_PNPase_1"/>
    <property type="match status" value="1"/>
</dbReference>
<dbReference type="CDD" id="cd11364">
    <property type="entry name" value="RNase_PH_PNPase_2"/>
    <property type="match status" value="1"/>
</dbReference>
<dbReference type="FunFam" id="3.30.230.70:FF:000032">
    <property type="entry name" value="Polyribonucleotide nucleotidyltransferase 1"/>
    <property type="match status" value="1"/>
</dbReference>
<dbReference type="FunFam" id="1.10.10.400:FF:000001">
    <property type="entry name" value="Polyribonucleotide nucleotidyltransferase 1, mitochondrial"/>
    <property type="match status" value="1"/>
</dbReference>
<dbReference type="FunFam" id="3.30.1370.10:FF:000044">
    <property type="entry name" value="Polyribonucleotide nucleotidyltransferase 1, mitochondrial"/>
    <property type="match status" value="1"/>
</dbReference>
<dbReference type="FunFam" id="2.40.50.140:FF:000113">
    <property type="entry name" value="polyribonucleotide nucleotidyltransferase 1, mitochondrial"/>
    <property type="match status" value="1"/>
</dbReference>
<dbReference type="FunFam" id="3.30.230.70:FF:000008">
    <property type="entry name" value="polyribonucleotide nucleotidyltransferase 1, mitochondrial"/>
    <property type="match status" value="1"/>
</dbReference>
<dbReference type="Gene3D" id="3.30.230.70">
    <property type="entry name" value="GHMP Kinase, N-terminal domain"/>
    <property type="match status" value="2"/>
</dbReference>
<dbReference type="Gene3D" id="3.30.1370.10">
    <property type="entry name" value="K Homology domain, type 1"/>
    <property type="match status" value="1"/>
</dbReference>
<dbReference type="Gene3D" id="2.40.50.140">
    <property type="entry name" value="Nucleic acid-binding proteins"/>
    <property type="match status" value="1"/>
</dbReference>
<dbReference type="Gene3D" id="1.10.10.400">
    <property type="entry name" value="Polyribonucleotide nucleotidyltransferase, RNA-binding domain"/>
    <property type="match status" value="1"/>
</dbReference>
<dbReference type="InterPro" id="IPR001247">
    <property type="entry name" value="ExoRNase_PH_dom1"/>
</dbReference>
<dbReference type="InterPro" id="IPR015847">
    <property type="entry name" value="ExoRNase_PH_dom2"/>
</dbReference>
<dbReference type="InterPro" id="IPR036345">
    <property type="entry name" value="ExoRNase_PH_dom2_sf"/>
</dbReference>
<dbReference type="InterPro" id="IPR004087">
    <property type="entry name" value="KH_dom"/>
</dbReference>
<dbReference type="InterPro" id="IPR004088">
    <property type="entry name" value="KH_dom_type_1"/>
</dbReference>
<dbReference type="InterPro" id="IPR036612">
    <property type="entry name" value="KH_dom_type_1_sf"/>
</dbReference>
<dbReference type="InterPro" id="IPR012340">
    <property type="entry name" value="NA-bd_OB-fold"/>
</dbReference>
<dbReference type="InterPro" id="IPR012162">
    <property type="entry name" value="PNPase"/>
</dbReference>
<dbReference type="InterPro" id="IPR027408">
    <property type="entry name" value="PNPase/RNase_PH_dom_sf"/>
</dbReference>
<dbReference type="InterPro" id="IPR015848">
    <property type="entry name" value="PNPase_PH_RNA-bd_bac/org-type"/>
</dbReference>
<dbReference type="InterPro" id="IPR036456">
    <property type="entry name" value="PNPase_PH_RNA-bd_sf"/>
</dbReference>
<dbReference type="InterPro" id="IPR020568">
    <property type="entry name" value="Ribosomal_Su5_D2-typ_SF"/>
</dbReference>
<dbReference type="InterPro" id="IPR003029">
    <property type="entry name" value="S1_domain"/>
</dbReference>
<dbReference type="NCBIfam" id="TIGR03591">
    <property type="entry name" value="polynuc_phos"/>
    <property type="match status" value="1"/>
</dbReference>
<dbReference type="NCBIfam" id="NF008805">
    <property type="entry name" value="PRK11824.1"/>
    <property type="match status" value="1"/>
</dbReference>
<dbReference type="PANTHER" id="PTHR11252">
    <property type="entry name" value="POLYRIBONUCLEOTIDE NUCLEOTIDYLTRANSFERASE"/>
    <property type="match status" value="1"/>
</dbReference>
<dbReference type="PANTHER" id="PTHR11252:SF0">
    <property type="entry name" value="POLYRIBONUCLEOTIDE NUCLEOTIDYLTRANSFERASE 1, MITOCHONDRIAL"/>
    <property type="match status" value="1"/>
</dbReference>
<dbReference type="Pfam" id="PF00013">
    <property type="entry name" value="KH_1"/>
    <property type="match status" value="1"/>
</dbReference>
<dbReference type="Pfam" id="PF03726">
    <property type="entry name" value="PNPase"/>
    <property type="match status" value="1"/>
</dbReference>
<dbReference type="Pfam" id="PF01138">
    <property type="entry name" value="RNase_PH"/>
    <property type="match status" value="2"/>
</dbReference>
<dbReference type="Pfam" id="PF03725">
    <property type="entry name" value="RNase_PH_C"/>
    <property type="match status" value="1"/>
</dbReference>
<dbReference type="Pfam" id="PF00575">
    <property type="entry name" value="S1"/>
    <property type="match status" value="1"/>
</dbReference>
<dbReference type="PIRSF" id="PIRSF005499">
    <property type="entry name" value="PNPase"/>
    <property type="match status" value="1"/>
</dbReference>
<dbReference type="SMART" id="SM00322">
    <property type="entry name" value="KH"/>
    <property type="match status" value="1"/>
</dbReference>
<dbReference type="SMART" id="SM00316">
    <property type="entry name" value="S1"/>
    <property type="match status" value="1"/>
</dbReference>
<dbReference type="SUPFAM" id="SSF54791">
    <property type="entry name" value="Eukaryotic type KH-domain (KH-domain type I)"/>
    <property type="match status" value="1"/>
</dbReference>
<dbReference type="SUPFAM" id="SSF50249">
    <property type="entry name" value="Nucleic acid-binding proteins"/>
    <property type="match status" value="1"/>
</dbReference>
<dbReference type="SUPFAM" id="SSF46915">
    <property type="entry name" value="Polynucleotide phosphorylase/guanosine pentaphosphate synthase (PNPase/GPSI), domain 3"/>
    <property type="match status" value="1"/>
</dbReference>
<dbReference type="SUPFAM" id="SSF55666">
    <property type="entry name" value="Ribonuclease PH domain 2-like"/>
    <property type="match status" value="2"/>
</dbReference>
<dbReference type="SUPFAM" id="SSF54211">
    <property type="entry name" value="Ribosomal protein S5 domain 2-like"/>
    <property type="match status" value="2"/>
</dbReference>
<dbReference type="PROSITE" id="PS50084">
    <property type="entry name" value="KH_TYPE_1"/>
    <property type="match status" value="1"/>
</dbReference>
<dbReference type="PROSITE" id="PS50126">
    <property type="entry name" value="S1"/>
    <property type="match status" value="1"/>
</dbReference>
<accession>Q8K1R3</accession>
<accession>Q3UEP9</accession>
<accession>Q810U7</accession>
<accession>Q812B3</accession>
<accession>Q8R2U3</accession>
<accession>Q9DC52</accession>
<keyword id="KW-0002">3D-structure</keyword>
<keyword id="KW-0007">Acetylation</keyword>
<keyword id="KW-0025">Alternative splicing</keyword>
<keyword id="KW-0963">Cytoplasm</keyword>
<keyword id="KW-0269">Exonuclease</keyword>
<keyword id="KW-0378">Hydrolase</keyword>
<keyword id="KW-0472">Membrane</keyword>
<keyword id="KW-0496">Mitochondrion</keyword>
<keyword id="KW-0507">mRNA processing</keyword>
<keyword id="KW-0540">Nuclease</keyword>
<keyword id="KW-0548">Nucleotidyltransferase</keyword>
<keyword id="KW-0597">Phosphoprotein</keyword>
<keyword id="KW-1185">Reference proteome</keyword>
<keyword id="KW-0694">RNA-binding</keyword>
<keyword id="KW-0808">Transferase</keyword>
<keyword id="KW-0809">Transit peptide</keyword>
<keyword id="KW-0813">Transport</keyword>
<reference key="1">
    <citation type="journal article" date="2002" name="J. Mol. Biol.">
        <title>Protein-protein interactions between human exosome components support the assembly of RNase PH-type subunits into a six-membered PNPase-like ring.</title>
        <authorList>
            <person name="Raijmakers R."/>
            <person name="Vree Egberts W."/>
            <person name="van Venrooij W.J."/>
            <person name="Pruijn G.J.M."/>
        </authorList>
    </citation>
    <scope>NUCLEOTIDE SEQUENCE [MRNA] (ISOFORM 1)</scope>
</reference>
<reference key="2">
    <citation type="submission" date="2002-01" db="EMBL/GenBank/DDBJ databases">
        <title>Cloning of mouse homolog of old-35.</title>
        <authorList>
            <person name="Leszczyniecka M."/>
            <person name="Fisher P.B."/>
        </authorList>
    </citation>
    <scope>NUCLEOTIDE SEQUENCE [MRNA] (ISOFORM 1)</scope>
</reference>
<reference key="3">
    <citation type="journal article" date="2005" name="Science">
        <title>The transcriptional landscape of the mammalian genome.</title>
        <authorList>
            <person name="Carninci P."/>
            <person name="Kasukawa T."/>
            <person name="Katayama S."/>
            <person name="Gough J."/>
            <person name="Frith M.C."/>
            <person name="Maeda N."/>
            <person name="Oyama R."/>
            <person name="Ravasi T."/>
            <person name="Lenhard B."/>
            <person name="Wells C."/>
            <person name="Kodzius R."/>
            <person name="Shimokawa K."/>
            <person name="Bajic V.B."/>
            <person name="Brenner S.E."/>
            <person name="Batalov S."/>
            <person name="Forrest A.R."/>
            <person name="Zavolan M."/>
            <person name="Davis M.J."/>
            <person name="Wilming L.G."/>
            <person name="Aidinis V."/>
            <person name="Allen J.E."/>
            <person name="Ambesi-Impiombato A."/>
            <person name="Apweiler R."/>
            <person name="Aturaliya R.N."/>
            <person name="Bailey T.L."/>
            <person name="Bansal M."/>
            <person name="Baxter L."/>
            <person name="Beisel K.W."/>
            <person name="Bersano T."/>
            <person name="Bono H."/>
            <person name="Chalk A.M."/>
            <person name="Chiu K.P."/>
            <person name="Choudhary V."/>
            <person name="Christoffels A."/>
            <person name="Clutterbuck D.R."/>
            <person name="Crowe M.L."/>
            <person name="Dalla E."/>
            <person name="Dalrymple B.P."/>
            <person name="de Bono B."/>
            <person name="Della Gatta G."/>
            <person name="di Bernardo D."/>
            <person name="Down T."/>
            <person name="Engstrom P."/>
            <person name="Fagiolini M."/>
            <person name="Faulkner G."/>
            <person name="Fletcher C.F."/>
            <person name="Fukushima T."/>
            <person name="Furuno M."/>
            <person name="Futaki S."/>
            <person name="Gariboldi M."/>
            <person name="Georgii-Hemming P."/>
            <person name="Gingeras T.R."/>
            <person name="Gojobori T."/>
            <person name="Green R.E."/>
            <person name="Gustincich S."/>
            <person name="Harbers M."/>
            <person name="Hayashi Y."/>
            <person name="Hensch T.K."/>
            <person name="Hirokawa N."/>
            <person name="Hill D."/>
            <person name="Huminiecki L."/>
            <person name="Iacono M."/>
            <person name="Ikeo K."/>
            <person name="Iwama A."/>
            <person name="Ishikawa T."/>
            <person name="Jakt M."/>
            <person name="Kanapin A."/>
            <person name="Katoh M."/>
            <person name="Kawasawa Y."/>
            <person name="Kelso J."/>
            <person name="Kitamura H."/>
            <person name="Kitano H."/>
            <person name="Kollias G."/>
            <person name="Krishnan S.P."/>
            <person name="Kruger A."/>
            <person name="Kummerfeld S.K."/>
            <person name="Kurochkin I.V."/>
            <person name="Lareau L.F."/>
            <person name="Lazarevic D."/>
            <person name="Lipovich L."/>
            <person name="Liu J."/>
            <person name="Liuni S."/>
            <person name="McWilliam S."/>
            <person name="Madan Babu M."/>
            <person name="Madera M."/>
            <person name="Marchionni L."/>
            <person name="Matsuda H."/>
            <person name="Matsuzawa S."/>
            <person name="Miki H."/>
            <person name="Mignone F."/>
            <person name="Miyake S."/>
            <person name="Morris K."/>
            <person name="Mottagui-Tabar S."/>
            <person name="Mulder N."/>
            <person name="Nakano N."/>
            <person name="Nakauchi H."/>
            <person name="Ng P."/>
            <person name="Nilsson R."/>
            <person name="Nishiguchi S."/>
            <person name="Nishikawa S."/>
            <person name="Nori F."/>
            <person name="Ohara O."/>
            <person name="Okazaki Y."/>
            <person name="Orlando V."/>
            <person name="Pang K.C."/>
            <person name="Pavan W.J."/>
            <person name="Pavesi G."/>
            <person name="Pesole G."/>
            <person name="Petrovsky N."/>
            <person name="Piazza S."/>
            <person name="Reed J."/>
            <person name="Reid J.F."/>
            <person name="Ring B.Z."/>
            <person name="Ringwald M."/>
            <person name="Rost B."/>
            <person name="Ruan Y."/>
            <person name="Salzberg S.L."/>
            <person name="Sandelin A."/>
            <person name="Schneider C."/>
            <person name="Schoenbach C."/>
            <person name="Sekiguchi K."/>
            <person name="Semple C.A."/>
            <person name="Seno S."/>
            <person name="Sessa L."/>
            <person name="Sheng Y."/>
            <person name="Shibata Y."/>
            <person name="Shimada H."/>
            <person name="Shimada K."/>
            <person name="Silva D."/>
            <person name="Sinclair B."/>
            <person name="Sperling S."/>
            <person name="Stupka E."/>
            <person name="Sugiura K."/>
            <person name="Sultana R."/>
            <person name="Takenaka Y."/>
            <person name="Taki K."/>
            <person name="Tammoja K."/>
            <person name="Tan S.L."/>
            <person name="Tang S."/>
            <person name="Taylor M.S."/>
            <person name="Tegner J."/>
            <person name="Teichmann S.A."/>
            <person name="Ueda H.R."/>
            <person name="van Nimwegen E."/>
            <person name="Verardo R."/>
            <person name="Wei C.L."/>
            <person name="Yagi K."/>
            <person name="Yamanishi H."/>
            <person name="Zabarovsky E."/>
            <person name="Zhu S."/>
            <person name="Zimmer A."/>
            <person name="Hide W."/>
            <person name="Bult C."/>
            <person name="Grimmond S.M."/>
            <person name="Teasdale R.D."/>
            <person name="Liu E.T."/>
            <person name="Brusic V."/>
            <person name="Quackenbush J."/>
            <person name="Wahlestedt C."/>
            <person name="Mattick J.S."/>
            <person name="Hume D.A."/>
            <person name="Kai C."/>
            <person name="Sasaki D."/>
            <person name="Tomaru Y."/>
            <person name="Fukuda S."/>
            <person name="Kanamori-Katayama M."/>
            <person name="Suzuki M."/>
            <person name="Aoki J."/>
            <person name="Arakawa T."/>
            <person name="Iida J."/>
            <person name="Imamura K."/>
            <person name="Itoh M."/>
            <person name="Kato T."/>
            <person name="Kawaji H."/>
            <person name="Kawagashira N."/>
            <person name="Kawashima T."/>
            <person name="Kojima M."/>
            <person name="Kondo S."/>
            <person name="Konno H."/>
            <person name="Nakano K."/>
            <person name="Ninomiya N."/>
            <person name="Nishio T."/>
            <person name="Okada M."/>
            <person name="Plessy C."/>
            <person name="Shibata K."/>
            <person name="Shiraki T."/>
            <person name="Suzuki S."/>
            <person name="Tagami M."/>
            <person name="Waki K."/>
            <person name="Watahiki A."/>
            <person name="Okamura-Oho Y."/>
            <person name="Suzuki H."/>
            <person name="Kawai J."/>
            <person name="Hayashizaki Y."/>
        </authorList>
    </citation>
    <scope>NUCLEOTIDE SEQUENCE [LARGE SCALE MRNA] (ISOFORMS 1 AND 2)</scope>
    <source>
        <strain>C57BL/6J</strain>
        <tissue>Liver</tissue>
        <tissue>Lung</tissue>
    </source>
</reference>
<reference key="4">
    <citation type="journal article" date="2009" name="PLoS Biol.">
        <title>Lineage-specific biology revealed by a finished genome assembly of the mouse.</title>
        <authorList>
            <person name="Church D.M."/>
            <person name="Goodstadt L."/>
            <person name="Hillier L.W."/>
            <person name="Zody M.C."/>
            <person name="Goldstein S."/>
            <person name="She X."/>
            <person name="Bult C.J."/>
            <person name="Agarwala R."/>
            <person name="Cherry J.L."/>
            <person name="DiCuccio M."/>
            <person name="Hlavina W."/>
            <person name="Kapustin Y."/>
            <person name="Meric P."/>
            <person name="Maglott D."/>
            <person name="Birtle Z."/>
            <person name="Marques A.C."/>
            <person name="Graves T."/>
            <person name="Zhou S."/>
            <person name="Teague B."/>
            <person name="Potamousis K."/>
            <person name="Churas C."/>
            <person name="Place M."/>
            <person name="Herschleb J."/>
            <person name="Runnheim R."/>
            <person name="Forrest D."/>
            <person name="Amos-Landgraf J."/>
            <person name="Schwartz D.C."/>
            <person name="Cheng Z."/>
            <person name="Lindblad-Toh K."/>
            <person name="Eichler E.E."/>
            <person name="Ponting C.P."/>
        </authorList>
    </citation>
    <scope>NUCLEOTIDE SEQUENCE [LARGE SCALE GENOMIC DNA]</scope>
    <source>
        <strain>C57BL/6J</strain>
    </source>
</reference>
<reference key="5">
    <citation type="journal article" date="2004" name="Genome Res.">
        <title>The status, quality, and expansion of the NIH full-length cDNA project: the Mammalian Gene Collection (MGC).</title>
        <authorList>
            <consortium name="The MGC Project Team"/>
        </authorList>
    </citation>
    <scope>NUCLEOTIDE SEQUENCE [LARGE SCALE MRNA] (ISOFORM 1)</scope>
    <source>
        <strain>FVB/N</strain>
        <tissue>Mammary gland</tissue>
        <tissue>Mammary tumor</tissue>
    </source>
</reference>
<reference key="6">
    <citation type="journal article" date="2006" name="Mol. Cell. Biol.">
        <title>Mammalian polynucleotide phosphorylase is an intermembrane space RNase that maintains mitochondrial homeostasis.</title>
        <authorList>
            <person name="Chen H.W."/>
            <person name="Rainey R.N."/>
            <person name="Balatoni C.E."/>
            <person name="Dawson D.W."/>
            <person name="Troke J.J."/>
            <person name="Wasiak S."/>
            <person name="Hong J.S."/>
            <person name="McBride H.M."/>
            <person name="Koehler C.M."/>
            <person name="Teitell M.A."/>
            <person name="French S.W."/>
        </authorList>
    </citation>
    <scope>SUBCELLULAR LOCATION</scope>
</reference>
<reference key="7">
    <citation type="journal article" date="2010" name="Cell">
        <title>PNPASE regulates RNA import into mitochondria.</title>
        <authorList>
            <person name="Wang G."/>
            <person name="Chen H.W."/>
            <person name="Oktay Y."/>
            <person name="Zhang J."/>
            <person name="Allen E.L."/>
            <person name="Smith G.M."/>
            <person name="Fan K.C."/>
            <person name="Hong J.S."/>
            <person name="French S.W."/>
            <person name="McCaffery J.M."/>
            <person name="Lightowlers R.N."/>
            <person name="Morse H.C. III"/>
            <person name="Koehler C.M."/>
            <person name="Teitell M.A."/>
        </authorList>
    </citation>
    <scope>FUNCTION</scope>
    <scope>DISRUPTION PHENOTYPE</scope>
</reference>
<reference key="8">
    <citation type="journal article" date="2010" name="Cell">
        <title>A tissue-specific atlas of mouse protein phosphorylation and expression.</title>
        <authorList>
            <person name="Huttlin E.L."/>
            <person name="Jedrychowski M.P."/>
            <person name="Elias J.E."/>
            <person name="Goswami T."/>
            <person name="Rad R."/>
            <person name="Beausoleil S.A."/>
            <person name="Villen J."/>
            <person name="Haas W."/>
            <person name="Sowa M.E."/>
            <person name="Gygi S.P."/>
        </authorList>
    </citation>
    <scope>IDENTIFICATION BY MASS SPECTROMETRY [LARGE SCALE ANALYSIS]</scope>
    <source>
        <tissue>Brain</tissue>
        <tissue>Brown adipose tissue</tissue>
        <tissue>Heart</tissue>
        <tissue>Kidney</tissue>
        <tissue>Liver</tissue>
        <tissue>Lung</tissue>
        <tissue>Spleen</tissue>
        <tissue>Testis</tissue>
    </source>
</reference>
<reference key="9">
    <citation type="journal article" date="2013" name="Mol. Cell">
        <title>SIRT5-mediated lysine desuccinylation impacts diverse metabolic pathways.</title>
        <authorList>
            <person name="Park J."/>
            <person name="Chen Y."/>
            <person name="Tishkoff D.X."/>
            <person name="Peng C."/>
            <person name="Tan M."/>
            <person name="Dai L."/>
            <person name="Xie Z."/>
            <person name="Zhang Y."/>
            <person name="Zwaans B.M."/>
            <person name="Skinner M.E."/>
            <person name="Lombard D.B."/>
            <person name="Zhao Y."/>
        </authorList>
    </citation>
    <scope>SUCCINYLATION [LARGE SCALE ANALYSIS] AT LYS-552</scope>
    <scope>IDENTIFICATION BY MASS SPECTROMETRY [LARGE SCALE ANALYSIS]</scope>
    <source>
        <tissue>Liver</tissue>
    </source>
</reference>
<reference key="10">
    <citation type="journal article" date="2013" name="Proc. Natl. Acad. Sci. U.S.A.">
        <title>Label-free quantitative proteomics of the lysine acetylome in mitochondria identifies substrates of SIRT3 in metabolic pathways.</title>
        <authorList>
            <person name="Rardin M.J."/>
            <person name="Newman J.C."/>
            <person name="Held J.M."/>
            <person name="Cusack M.P."/>
            <person name="Sorensen D.J."/>
            <person name="Li B."/>
            <person name="Schilling B."/>
            <person name="Mooney S.D."/>
            <person name="Kahn C.R."/>
            <person name="Verdin E."/>
            <person name="Gibson B.W."/>
        </authorList>
    </citation>
    <scope>ACETYLATION [LARGE SCALE ANALYSIS] AT LYS-250</scope>
    <scope>IDENTIFICATION BY MASS SPECTROMETRY [LARGE SCALE ANALYSIS]</scope>
    <source>
        <tissue>Liver</tissue>
    </source>
</reference>
<reference key="11">
    <citation type="submission" date="2004-11" db="PDB data bank">
        <title>Solution structure of the alpha-helical domain from mouse hypothetical PNPase.</title>
        <authorList>
            <consortium name="RIKEN structural genomics initiative (RSGI)"/>
        </authorList>
    </citation>
    <scope>STRUCTURE BY NMR OF 273-363</scope>
</reference>
<protein>
    <recommendedName>
        <fullName>Polyribonucleotide nucleotidyltransferase 1, mitochondrial</fullName>
        <ecNumber>2.7.7.8</ecNumber>
    </recommendedName>
    <alternativeName>
        <fullName>3'-5' RNA exonuclease OLD35</fullName>
    </alternativeName>
    <alternativeName>
        <fullName>PNPase old-35</fullName>
    </alternativeName>
    <alternativeName>
        <fullName>Polynucleotide phosphorylase 1</fullName>
        <shortName>PNPase 1</shortName>
    </alternativeName>
    <alternativeName>
        <fullName>Polynucleotide phosphorylase-like protein</fullName>
    </alternativeName>
</protein>
<organism>
    <name type="scientific">Mus musculus</name>
    <name type="common">Mouse</name>
    <dbReference type="NCBI Taxonomy" id="10090"/>
    <lineage>
        <taxon>Eukaryota</taxon>
        <taxon>Metazoa</taxon>
        <taxon>Chordata</taxon>
        <taxon>Craniata</taxon>
        <taxon>Vertebrata</taxon>
        <taxon>Euteleostomi</taxon>
        <taxon>Mammalia</taxon>
        <taxon>Eutheria</taxon>
        <taxon>Euarchontoglires</taxon>
        <taxon>Glires</taxon>
        <taxon>Rodentia</taxon>
        <taxon>Myomorpha</taxon>
        <taxon>Muroidea</taxon>
        <taxon>Muridae</taxon>
        <taxon>Murinae</taxon>
        <taxon>Mus</taxon>
        <taxon>Mus</taxon>
    </lineage>
</organism>
<sequence>MAACRLCCLCPCLRPLGCGPLGRPGRNRALSYLQMRALWSSTGSRAVTVDLGHRKLEISSGKLARFADGCAVIQSGDTAVMVTAVSKTKASPSQFMPLVVDYRQKAAAAGRIPTNYLRREIGSSDREVLTSRVIDRSIRPLFPAGYFYDTQVLCNLLAVDGINEPDILAVNGASVALSLSDIPWNGPVGAVRIGMIDGECVVNPTRREMSSSTLNLVVAGAPKSQIVMLEASAENILQQDFCHAIKVGVKYTQQIIQGIQQLVKEIGVAKRTPQKIFTPSAEIVKYTKIIAMEKLYAVFTDYEHDKVSRDEAVNKIRLDTEEHLKEKFPEVDQFEIIESFNIVAKEVFRSIILNEYKRCDGRDLTSLRNISCEVDMFKTLHGSALFQRGQTQVLCTVTFDSLESSIKSDQIITAINGVKDKNFMLHYEFPPYATNETGKVTGVNRRELGHGALAEKALCPVIPKDFPFTIRVTSEVLESNGSSSMASACGGSLALMDAGVPISSAVAGVAVGLVTKTNPEKGEIEDYRLLTDILGIEDYNGDMDFKIAGTNKGITALQADIKLPGVPIKIIMEAIQQASVAKKEILQIMNKTISKPRASRKENGPVVETVKVPLSKRAKFVGPGGYHLKKLQAETGVTISQVDEETFSIFAPTPTAMHEARDFITEICRDDQEQQLEFGAVYTATITEIRDTGVMVKLYPNMTAVLLHNSQLDQRKIKHPTALGLEVGQEIQVKYFGRDPADGRMRLSRKVLQSPATTALKTLNDRSSIVMGEPVSQSSNSNP</sequence>